<sequence length="406" mass="47872">MSGCPFLGNNFGYTFKKLPVEGSEEDKSQTGVNRASKGGLIYGNYLHLEKVLNAQELQSETKGNKIHDEHLFIITHQAYELWFKQILWELDSVREIFQNGHVRDERNMLKVVSRMHRVSVILKLLVQQFSILETMTALDFNDFREYLSPASGFQSLQFRLLENKIGVLQNMRVPYNRRHYRDNFKGEENELLLKSEQEKTLLELVEAWLERTPGLEPHGFNFWGKLEKNITRGLEEEFIRIQAKEESEEKEEQVAEFQKQKEVLLSLFDEKRHEHLLSKGERRLSYRALQGALMIYFYREEPRFQVPFQLLTSLMDIDSLMTKWRYNHVCMVHRMLGSKAGTGGSSGYHYLRSTVSDRYKVFVDLFNLSTYLIPRHWIPKMNPTIHKFLYTAEYCDSSYFSSDESD</sequence>
<name>T23O_HUMAN</name>
<keyword id="KW-0002">3D-structure</keyword>
<keyword id="KW-0223">Dioxygenase</keyword>
<keyword id="KW-0225">Disease variant</keyword>
<keyword id="KW-0349">Heme</keyword>
<keyword id="KW-0408">Iron</keyword>
<keyword id="KW-0479">Metal-binding</keyword>
<keyword id="KW-0560">Oxidoreductase</keyword>
<keyword id="KW-1267">Proteomics identification</keyword>
<keyword id="KW-1185">Reference proteome</keyword>
<keyword id="KW-0823">Tryptophan catabolism</keyword>
<evidence type="ECO:0000255" key="1">
    <source>
        <dbReference type="HAMAP-Rule" id="MF_03020"/>
    </source>
</evidence>
<evidence type="ECO:0000269" key="2">
    <source>
    </source>
</evidence>
<evidence type="ECO:0000269" key="3">
    <source>
    </source>
</evidence>
<evidence type="ECO:0000269" key="4">
    <source>
    </source>
</evidence>
<evidence type="ECO:0007744" key="5">
    <source>
        <dbReference type="PDB" id="4PW8"/>
    </source>
</evidence>
<evidence type="ECO:0007744" key="6">
    <source>
        <dbReference type="PDB" id="5TI9"/>
    </source>
</evidence>
<evidence type="ECO:0007744" key="7">
    <source>
        <dbReference type="PDB" id="5TIA"/>
    </source>
</evidence>
<evidence type="ECO:0007829" key="8">
    <source>
        <dbReference type="PDB" id="6PYZ"/>
    </source>
</evidence>
<evidence type="ECO:0007829" key="9">
    <source>
        <dbReference type="PDB" id="6UD5"/>
    </source>
</evidence>
<evidence type="ECO:0007829" key="10">
    <source>
        <dbReference type="PDB" id="6VBN"/>
    </source>
</evidence>
<accession>P48775</accession>
<accession>A8K053</accession>
<feature type="chain" id="PRO_0000072399" description="Tryptophan 2,3-dioxygenase">
    <location>
        <begin position="1"/>
        <end position="406"/>
    </location>
</feature>
<feature type="binding site" evidence="1 3 6">
    <location>
        <begin position="72"/>
        <end position="76"/>
    </location>
    <ligand>
        <name>substrate</name>
    </ligand>
</feature>
<feature type="binding site" evidence="1 3 6">
    <location>
        <position position="144"/>
    </location>
    <ligand>
        <name>substrate</name>
    </ligand>
</feature>
<feature type="binding site" description="axial binding residue" evidence="1 3 6">
    <location>
        <position position="328"/>
    </location>
    <ligand>
        <name>heme</name>
        <dbReference type="ChEBI" id="CHEBI:30413"/>
    </ligand>
    <ligandPart>
        <name>Fe</name>
        <dbReference type="ChEBI" id="CHEBI:18248"/>
    </ligandPart>
</feature>
<feature type="binding site" evidence="1 3 6">
    <location>
        <position position="342"/>
    </location>
    <ligand>
        <name>substrate</name>
    </ligand>
</feature>
<feature type="sequence variant" id="VAR_080251" description="In HYPTRP; reduced tryptophan 2,3-dioxygenase activity; does not affect homotetramerization; dbSNP:rs1553957997." evidence="4">
    <original>M</original>
    <variation>I</variation>
    <location>
        <position position="108"/>
    </location>
</feature>
<feature type="mutagenesis site" description="Reduces enzyme activity by 99%." evidence="2">
    <original>Y</original>
    <variation>A</variation>
    <location>
        <position position="42"/>
    </location>
</feature>
<feature type="mutagenesis site" description="Reduces enzyme activity by 99%." evidence="2">
    <original>Y</original>
    <variation>A</variation>
    <location>
        <position position="45"/>
    </location>
</feature>
<feature type="mutagenesis site" description="Abolishes enzyme activity." evidence="2">
    <original>F</original>
    <variation>A</variation>
    <location>
        <position position="72"/>
    </location>
</feature>
<feature type="mutagenesis site" description="Abolishes enzyme activity." evidence="2">
    <original>H</original>
    <variation>A</variation>
    <location>
        <position position="76"/>
    </location>
</feature>
<feature type="mutagenesis site" description="Reduces enzyme activity by 99%." evidence="2">
    <original>F</original>
    <variation>A</variation>
    <location>
        <position position="140"/>
    </location>
</feature>
<feature type="mutagenesis site" description="Reduces enzyme activity by 99%." evidence="2">
    <original>R</original>
    <variation>A</variation>
    <location>
        <position position="144"/>
    </location>
</feature>
<feature type="mutagenesis site" description="Reduces enzyme activity by 90%." evidence="2">
    <original>S</original>
    <variation>A</variation>
    <location>
        <position position="151"/>
    </location>
</feature>
<feature type="mutagenesis site" description="Reduces enzyme activity." evidence="3">
    <original>Y</original>
    <variation>G</variation>
    <location>
        <position position="175"/>
    </location>
</feature>
<feature type="mutagenesis site" description="Abolishes enzyme activity." evidence="2">
    <original>H</original>
    <variation>A</variation>
    <location>
        <position position="328"/>
    </location>
</feature>
<feature type="helix" evidence="8">
    <location>
        <begin position="42"/>
        <end position="45"/>
    </location>
</feature>
<feature type="helix" evidence="8">
    <location>
        <begin position="48"/>
        <end position="51"/>
    </location>
</feature>
<feature type="helix" evidence="8">
    <location>
        <begin position="58"/>
        <end position="61"/>
    </location>
</feature>
<feature type="helix" evidence="8">
    <location>
        <begin position="69"/>
        <end position="98"/>
    </location>
</feature>
<feature type="helix" evidence="8">
    <location>
        <begin position="101"/>
        <end position="103"/>
    </location>
</feature>
<feature type="helix" evidence="8">
    <location>
        <begin position="105"/>
        <end position="107"/>
    </location>
</feature>
<feature type="helix" evidence="8">
    <location>
        <begin position="108"/>
        <end position="132"/>
    </location>
</feature>
<feature type="helix" evidence="8">
    <location>
        <begin position="137"/>
        <end position="140"/>
    </location>
</feature>
<feature type="turn" evidence="8">
    <location>
        <begin position="141"/>
        <end position="143"/>
    </location>
</feature>
<feature type="helix" evidence="8">
    <location>
        <begin position="144"/>
        <end position="146"/>
    </location>
</feature>
<feature type="turn" evidence="8">
    <location>
        <begin position="147"/>
        <end position="149"/>
    </location>
</feature>
<feature type="helix" evidence="8">
    <location>
        <begin position="152"/>
        <end position="154"/>
    </location>
</feature>
<feature type="helix" evidence="8">
    <location>
        <begin position="156"/>
        <end position="165"/>
    </location>
</feature>
<feature type="helix" evidence="8">
    <location>
        <begin position="169"/>
        <end position="171"/>
    </location>
</feature>
<feature type="helix" evidence="8">
    <location>
        <begin position="174"/>
        <end position="179"/>
    </location>
</feature>
<feature type="helix" evidence="9">
    <location>
        <begin position="181"/>
        <end position="183"/>
    </location>
</feature>
<feature type="helix" evidence="8">
    <location>
        <begin position="186"/>
        <end position="197"/>
    </location>
</feature>
<feature type="helix" evidence="8">
    <location>
        <begin position="201"/>
        <end position="210"/>
    </location>
</feature>
<feature type="turn" evidence="8">
    <location>
        <begin position="217"/>
        <end position="220"/>
    </location>
</feature>
<feature type="helix" evidence="8">
    <location>
        <begin position="222"/>
        <end position="242"/>
    </location>
</feature>
<feature type="helix" evidence="8">
    <location>
        <begin position="248"/>
        <end position="266"/>
    </location>
</feature>
<feature type="helix" evidence="8">
    <location>
        <begin position="270"/>
        <end position="278"/>
    </location>
</feature>
<feature type="helix" evidence="8">
    <location>
        <begin position="286"/>
        <end position="297"/>
    </location>
</feature>
<feature type="turn" evidence="8">
    <location>
        <begin position="298"/>
        <end position="300"/>
    </location>
</feature>
<feature type="helix" evidence="8">
    <location>
        <begin position="302"/>
        <end position="304"/>
    </location>
</feature>
<feature type="helix" evidence="8">
    <location>
        <begin position="305"/>
        <end position="336"/>
    </location>
</feature>
<feature type="strand" evidence="10">
    <location>
        <begin position="342"/>
        <end position="345"/>
    </location>
</feature>
<feature type="helix" evidence="8">
    <location>
        <begin position="348"/>
        <end position="352"/>
    </location>
</feature>
<feature type="helix" evidence="8">
    <location>
        <begin position="357"/>
        <end position="359"/>
    </location>
</feature>
<feature type="helix" evidence="8">
    <location>
        <begin position="363"/>
        <end position="367"/>
    </location>
</feature>
<feature type="helix" evidence="8">
    <location>
        <begin position="368"/>
        <end position="371"/>
    </location>
</feature>
<feature type="helix" evidence="8">
    <location>
        <begin position="375"/>
        <end position="377"/>
    </location>
</feature>
<feature type="helix" evidence="8">
    <location>
        <begin position="383"/>
        <end position="388"/>
    </location>
</feature>
<organism>
    <name type="scientific">Homo sapiens</name>
    <name type="common">Human</name>
    <dbReference type="NCBI Taxonomy" id="9606"/>
    <lineage>
        <taxon>Eukaryota</taxon>
        <taxon>Metazoa</taxon>
        <taxon>Chordata</taxon>
        <taxon>Craniata</taxon>
        <taxon>Vertebrata</taxon>
        <taxon>Euteleostomi</taxon>
        <taxon>Mammalia</taxon>
        <taxon>Eutheria</taxon>
        <taxon>Euarchontoglires</taxon>
        <taxon>Primates</taxon>
        <taxon>Haplorrhini</taxon>
        <taxon>Catarrhini</taxon>
        <taxon>Hominidae</taxon>
        <taxon>Homo</taxon>
    </lineage>
</organism>
<dbReference type="EC" id="1.13.11.11" evidence="1 2 3 4"/>
<dbReference type="EMBL" id="U32989">
    <property type="protein sequence ID" value="AAB08514.1"/>
    <property type="molecule type" value="mRNA"/>
</dbReference>
<dbReference type="EMBL" id="AK289418">
    <property type="protein sequence ID" value="BAF82107.1"/>
    <property type="molecule type" value="mRNA"/>
</dbReference>
<dbReference type="EMBL" id="CH471056">
    <property type="protein sequence ID" value="EAX04885.1"/>
    <property type="molecule type" value="Genomic_DNA"/>
</dbReference>
<dbReference type="EMBL" id="BC005355">
    <property type="protein sequence ID" value="AAH05355.1"/>
    <property type="molecule type" value="mRNA"/>
</dbReference>
<dbReference type="CCDS" id="CCDS34086.1"/>
<dbReference type="PIR" id="G02022">
    <property type="entry name" value="G02022"/>
</dbReference>
<dbReference type="RefSeq" id="NP_005642.1">
    <property type="nucleotide sequence ID" value="NM_005651.4"/>
</dbReference>
<dbReference type="PDB" id="4PW8">
    <property type="method" value="X-ray"/>
    <property type="resolution" value="2.90 A"/>
    <property type="chains" value="A/B/C/D/E/F/G/H=19-388"/>
</dbReference>
<dbReference type="PDB" id="5TI9">
    <property type="method" value="X-ray"/>
    <property type="resolution" value="2.50 A"/>
    <property type="chains" value="A/B/C/D=18-389"/>
</dbReference>
<dbReference type="PDB" id="5TIA">
    <property type="method" value="X-ray"/>
    <property type="resolution" value="2.44 A"/>
    <property type="chains" value="A/B/C/D=18-389"/>
</dbReference>
<dbReference type="PDB" id="6A4I">
    <property type="method" value="X-ray"/>
    <property type="resolution" value="2.65 A"/>
    <property type="chains" value="A/B/C/D=19-388"/>
</dbReference>
<dbReference type="PDB" id="6PYY">
    <property type="method" value="X-ray"/>
    <property type="resolution" value="2.40 A"/>
    <property type="chains" value="A/B/C/D=18-389"/>
</dbReference>
<dbReference type="PDB" id="6PYZ">
    <property type="method" value="X-ray"/>
    <property type="resolution" value="2.02 A"/>
    <property type="chains" value="A/B/C/D=18-389"/>
</dbReference>
<dbReference type="PDB" id="6UD5">
    <property type="method" value="X-ray"/>
    <property type="resolution" value="2.05 A"/>
    <property type="chains" value="A/B/C/D=18-389"/>
</dbReference>
<dbReference type="PDB" id="6VBN">
    <property type="method" value="X-ray"/>
    <property type="resolution" value="3.18 A"/>
    <property type="chains" value="A/B/C/D=18-388"/>
</dbReference>
<dbReference type="PDB" id="7LU7">
    <property type="method" value="X-ray"/>
    <property type="resolution" value="2.30 A"/>
    <property type="chains" value="AAA/BBB/CCC/DDD=18-389"/>
</dbReference>
<dbReference type="PDB" id="7UI3">
    <property type="method" value="X-ray"/>
    <property type="resolution" value="3.18 A"/>
    <property type="chains" value="A/B/C/D=18-389"/>
</dbReference>
<dbReference type="PDB" id="8QV7">
    <property type="method" value="X-ray"/>
    <property type="resolution" value="2.66 A"/>
    <property type="chains" value="A/B/C/D=39-389"/>
</dbReference>
<dbReference type="PDB" id="8R5Q">
    <property type="method" value="X-ray"/>
    <property type="resolution" value="2.62 A"/>
    <property type="chains" value="A/B/C/D=39-389"/>
</dbReference>
<dbReference type="PDB" id="8R5R">
    <property type="method" value="X-ray"/>
    <property type="resolution" value="3.08 A"/>
    <property type="chains" value="A/B/C/D=39-389"/>
</dbReference>
<dbReference type="PDB" id="8VTQ">
    <property type="method" value="X-ray"/>
    <property type="resolution" value="2.05 A"/>
    <property type="chains" value="A/B/C/D=18-389"/>
</dbReference>
<dbReference type="PDB" id="8VUG">
    <property type="method" value="X-ray"/>
    <property type="resolution" value="2.05 A"/>
    <property type="chains" value="A/B/C/D=18-389"/>
</dbReference>
<dbReference type="PDB" id="8VZV">
    <property type="method" value="X-ray"/>
    <property type="resolution" value="2.29 A"/>
    <property type="chains" value="AAA/BBB/CCC/DDD=18-389"/>
</dbReference>
<dbReference type="PDB" id="8W1H">
    <property type="method" value="X-ray"/>
    <property type="resolution" value="2.10 A"/>
    <property type="chains" value="A/B/C/D=18-389"/>
</dbReference>
<dbReference type="PDB" id="8W2K">
    <property type="method" value="X-ray"/>
    <property type="resolution" value="2.45 A"/>
    <property type="chains" value="A/B/C/D=18-389"/>
</dbReference>
<dbReference type="PDB" id="9AT2">
    <property type="method" value="X-ray"/>
    <property type="resolution" value="2.25 A"/>
    <property type="chains" value="A/B/C/D=18-389"/>
</dbReference>
<dbReference type="PDB" id="9B17">
    <property type="method" value="X-ray"/>
    <property type="resolution" value="2.65 A"/>
    <property type="chains" value="A/B/C/D=18-389"/>
</dbReference>
<dbReference type="PDB" id="9B1Q">
    <property type="method" value="X-ray"/>
    <property type="resolution" value="2.62 A"/>
    <property type="chains" value="A/B/C/D=18-389"/>
</dbReference>
<dbReference type="PDB" id="9EZJ">
    <property type="method" value="X-ray"/>
    <property type="resolution" value="2.61 A"/>
    <property type="chains" value="A/B/C/D=19-406"/>
</dbReference>
<dbReference type="PDBsum" id="4PW8"/>
<dbReference type="PDBsum" id="5TI9"/>
<dbReference type="PDBsum" id="5TIA"/>
<dbReference type="PDBsum" id="6A4I"/>
<dbReference type="PDBsum" id="6PYY"/>
<dbReference type="PDBsum" id="6PYZ"/>
<dbReference type="PDBsum" id="6UD5"/>
<dbReference type="PDBsum" id="6VBN"/>
<dbReference type="PDBsum" id="7LU7"/>
<dbReference type="PDBsum" id="7UI3"/>
<dbReference type="PDBsum" id="8QV7"/>
<dbReference type="PDBsum" id="8R5Q"/>
<dbReference type="PDBsum" id="8R5R"/>
<dbReference type="PDBsum" id="8VTQ"/>
<dbReference type="PDBsum" id="8VUG"/>
<dbReference type="PDBsum" id="8VZV"/>
<dbReference type="PDBsum" id="8W1H"/>
<dbReference type="PDBsum" id="8W2K"/>
<dbReference type="PDBsum" id="9AT2"/>
<dbReference type="PDBsum" id="9B17"/>
<dbReference type="PDBsum" id="9B1Q"/>
<dbReference type="PDBsum" id="9EZJ"/>
<dbReference type="SMR" id="P48775"/>
<dbReference type="BioGRID" id="112858">
    <property type="interactions" value="28"/>
</dbReference>
<dbReference type="FunCoup" id="P48775">
    <property type="interactions" value="293"/>
</dbReference>
<dbReference type="IntAct" id="P48775">
    <property type="interactions" value="24"/>
</dbReference>
<dbReference type="MINT" id="P48775"/>
<dbReference type="STRING" id="9606.ENSP00000444788"/>
<dbReference type="BindingDB" id="P48775"/>
<dbReference type="ChEMBL" id="CHEMBL2140"/>
<dbReference type="DrugBank" id="DB00779">
    <property type="generic name" value="Nalidixic acid"/>
</dbReference>
<dbReference type="DrugBank" id="DB00500">
    <property type="generic name" value="Tolmetin"/>
</dbReference>
<dbReference type="DrugBank" id="DB00150">
    <property type="generic name" value="Tryptophan"/>
</dbReference>
<dbReference type="GuidetoPHARMACOLOGY" id="2887"/>
<dbReference type="GlyGen" id="P48775">
    <property type="glycosylation" value="1 site"/>
</dbReference>
<dbReference type="iPTMnet" id="P48775"/>
<dbReference type="PhosphoSitePlus" id="P48775"/>
<dbReference type="BioMuta" id="TDO2"/>
<dbReference type="DMDM" id="1351188"/>
<dbReference type="MassIVE" id="P48775"/>
<dbReference type="PaxDb" id="9606-ENSP00000444788"/>
<dbReference type="PeptideAtlas" id="P48775"/>
<dbReference type="ProteomicsDB" id="55947"/>
<dbReference type="Antibodypedia" id="28079">
    <property type="antibodies" value="330 antibodies from 26 providers"/>
</dbReference>
<dbReference type="DNASU" id="6999"/>
<dbReference type="Ensembl" id="ENST00000536354.3">
    <property type="protein sequence ID" value="ENSP00000444788.2"/>
    <property type="gene ID" value="ENSG00000151790.9"/>
</dbReference>
<dbReference type="Ensembl" id="ENST00000573403.1">
    <property type="protein sequence ID" value="ENSP00000460086.1"/>
    <property type="gene ID" value="ENSG00000262635.5"/>
</dbReference>
<dbReference type="GeneID" id="6999"/>
<dbReference type="KEGG" id="hsa:6999"/>
<dbReference type="MANE-Select" id="ENST00000536354.3">
    <property type="protein sequence ID" value="ENSP00000444788.2"/>
    <property type="RefSeq nucleotide sequence ID" value="NM_005651.4"/>
    <property type="RefSeq protein sequence ID" value="NP_005642.1"/>
</dbReference>
<dbReference type="UCSC" id="uc003ipf.3">
    <property type="organism name" value="human"/>
</dbReference>
<dbReference type="AGR" id="HGNC:11708"/>
<dbReference type="CTD" id="6999"/>
<dbReference type="DisGeNET" id="6999"/>
<dbReference type="GeneCards" id="TDO2"/>
<dbReference type="HGNC" id="HGNC:11708">
    <property type="gene designation" value="TDO2"/>
</dbReference>
<dbReference type="HPA" id="ENSG00000151790">
    <property type="expression patterns" value="Tissue enriched (liver)"/>
</dbReference>
<dbReference type="MalaCards" id="TDO2"/>
<dbReference type="MIM" id="191070">
    <property type="type" value="gene"/>
</dbReference>
<dbReference type="MIM" id="600627">
    <property type="type" value="phenotype"/>
</dbReference>
<dbReference type="neXtProt" id="NX_P48775"/>
<dbReference type="OpenTargets" id="ENSG00000151790"/>
<dbReference type="Orphanet" id="2224">
    <property type="disease" value="Hypertryptophanemia"/>
</dbReference>
<dbReference type="PharmGKB" id="PA36427"/>
<dbReference type="VEuPathDB" id="HostDB:ENSG00000151790"/>
<dbReference type="eggNOG" id="KOG3906">
    <property type="taxonomic scope" value="Eukaryota"/>
</dbReference>
<dbReference type="GeneTree" id="ENSGT00390000008593"/>
<dbReference type="HOGENOM" id="CLU_045599_1_1_1"/>
<dbReference type="InParanoid" id="P48775"/>
<dbReference type="OMA" id="WRWRNDH"/>
<dbReference type="OrthoDB" id="447477at2759"/>
<dbReference type="PAN-GO" id="P48775">
    <property type="GO annotations" value="3 GO annotations based on evolutionary models"/>
</dbReference>
<dbReference type="PhylomeDB" id="P48775"/>
<dbReference type="TreeFam" id="TF105827"/>
<dbReference type="BioCyc" id="MetaCyc:HS07771-MONOMER"/>
<dbReference type="BRENDA" id="1.13.11.11">
    <property type="organism ID" value="2681"/>
</dbReference>
<dbReference type="BRENDA" id="1.13.11.52">
    <property type="organism ID" value="2681"/>
</dbReference>
<dbReference type="PathwayCommons" id="P48775"/>
<dbReference type="Reactome" id="R-HSA-71240">
    <property type="pathway name" value="Tryptophan catabolism"/>
</dbReference>
<dbReference type="SABIO-RK" id="P48775"/>
<dbReference type="SignaLink" id="P48775"/>
<dbReference type="SIGNOR" id="P48775"/>
<dbReference type="UniPathway" id="UPA00333">
    <property type="reaction ID" value="UER00453"/>
</dbReference>
<dbReference type="BioGRID-ORCS" id="6999">
    <property type="hits" value="16 hits in 1145 CRISPR screens"/>
</dbReference>
<dbReference type="ChiTaRS" id="TDO2">
    <property type="organism name" value="human"/>
</dbReference>
<dbReference type="EvolutionaryTrace" id="P48775"/>
<dbReference type="GeneWiki" id="TDO2"/>
<dbReference type="GenomeRNAi" id="6999"/>
<dbReference type="Pharos" id="P48775">
    <property type="development level" value="Tchem"/>
</dbReference>
<dbReference type="PRO" id="PR:P48775"/>
<dbReference type="Proteomes" id="UP000005640">
    <property type="component" value="Chromosome 4"/>
</dbReference>
<dbReference type="RNAct" id="P48775">
    <property type="molecule type" value="protein"/>
</dbReference>
<dbReference type="Bgee" id="ENSG00000151790">
    <property type="expression patterns" value="Expressed in right lobe of liver and 98 other cell types or tissues"/>
</dbReference>
<dbReference type="ExpressionAtlas" id="P48775">
    <property type="expression patterns" value="baseline and differential"/>
</dbReference>
<dbReference type="GO" id="GO:0005829">
    <property type="term" value="C:cytosol"/>
    <property type="evidence" value="ECO:0000304"/>
    <property type="project" value="Reactome"/>
</dbReference>
<dbReference type="GO" id="GO:0016597">
    <property type="term" value="F:amino acid binding"/>
    <property type="evidence" value="ECO:0007669"/>
    <property type="project" value="Ensembl"/>
</dbReference>
<dbReference type="GO" id="GO:0020037">
    <property type="term" value="F:heme binding"/>
    <property type="evidence" value="ECO:0000314"/>
    <property type="project" value="UniProtKB"/>
</dbReference>
<dbReference type="GO" id="GO:0042802">
    <property type="term" value="F:identical protein binding"/>
    <property type="evidence" value="ECO:0000353"/>
    <property type="project" value="IntAct"/>
</dbReference>
<dbReference type="GO" id="GO:0046872">
    <property type="term" value="F:metal ion binding"/>
    <property type="evidence" value="ECO:0007669"/>
    <property type="project" value="UniProtKB-KW"/>
</dbReference>
<dbReference type="GO" id="GO:0019825">
    <property type="term" value="F:oxygen binding"/>
    <property type="evidence" value="ECO:0007669"/>
    <property type="project" value="Ensembl"/>
</dbReference>
<dbReference type="GO" id="GO:0004833">
    <property type="term" value="F:tryptophan 2,3-dioxygenase activity"/>
    <property type="evidence" value="ECO:0000314"/>
    <property type="project" value="UniProtKB"/>
</dbReference>
<dbReference type="GO" id="GO:0019442">
    <property type="term" value="P:L-tryptophan catabolic process to acetyl-CoA"/>
    <property type="evidence" value="ECO:0000318"/>
    <property type="project" value="GO_Central"/>
</dbReference>
<dbReference type="GO" id="GO:0019441">
    <property type="term" value="P:L-tryptophan catabolic process to kynurenine"/>
    <property type="evidence" value="ECO:0000314"/>
    <property type="project" value="UniProtKB"/>
</dbReference>
<dbReference type="GO" id="GO:0051289">
    <property type="term" value="P:protein homotetramerization"/>
    <property type="evidence" value="ECO:0000314"/>
    <property type="project" value="UniProtKB"/>
</dbReference>
<dbReference type="GO" id="GO:1904842">
    <property type="term" value="P:response to nitroglycerin"/>
    <property type="evidence" value="ECO:0007669"/>
    <property type="project" value="Ensembl"/>
</dbReference>
<dbReference type="FunFam" id="1.10.287.3810:FF:000001">
    <property type="entry name" value="Tryptophan 2,3-dioxygenase"/>
    <property type="match status" value="1"/>
</dbReference>
<dbReference type="Gene3D" id="1.10.287.3810">
    <property type="match status" value="1"/>
</dbReference>
<dbReference type="Gene3D" id="1.20.58.480">
    <property type="match status" value="1"/>
</dbReference>
<dbReference type="HAMAP" id="MF_01972">
    <property type="entry name" value="T23O"/>
    <property type="match status" value="1"/>
</dbReference>
<dbReference type="InterPro" id="IPR037217">
    <property type="entry name" value="Trp/Indoleamine_2_3_dOase-like"/>
</dbReference>
<dbReference type="InterPro" id="IPR004981">
    <property type="entry name" value="Trp_2_3_dOase"/>
</dbReference>
<dbReference type="PANTHER" id="PTHR10138">
    <property type="entry name" value="TRYPTOPHAN 2,3-DIOXYGENASE"/>
    <property type="match status" value="1"/>
</dbReference>
<dbReference type="PANTHER" id="PTHR10138:SF0">
    <property type="entry name" value="TRYPTOPHAN 2,3-DIOXYGENASE"/>
    <property type="match status" value="1"/>
</dbReference>
<dbReference type="Pfam" id="PF03301">
    <property type="entry name" value="Trp_dioxygenase"/>
    <property type="match status" value="1"/>
</dbReference>
<dbReference type="SUPFAM" id="SSF140959">
    <property type="entry name" value="Indolic compounds 2,3-dioxygenase-like"/>
    <property type="match status" value="1"/>
</dbReference>
<reference key="1">
    <citation type="journal article" date="1995" name="Genomics">
        <title>Sequence of human tryptophan 2,3-dioxygenase (TDO2): presence of a glucocorticoid response-like element composed of a GTT repeat and an intronic CCCCT repeat.</title>
        <authorList>
            <person name="Comings D.E."/>
            <person name="Muhleman D."/>
            <person name="Dietz G."/>
            <person name="Sherman M."/>
            <person name="Forest G.L."/>
        </authorList>
    </citation>
    <scope>NUCLEOTIDE SEQUENCE [MRNA]</scope>
    <source>
        <tissue>Brain</tissue>
    </source>
</reference>
<reference key="2">
    <citation type="journal article" date="2004" name="Nat. Genet.">
        <title>Complete sequencing and characterization of 21,243 full-length human cDNAs.</title>
        <authorList>
            <person name="Ota T."/>
            <person name="Suzuki Y."/>
            <person name="Nishikawa T."/>
            <person name="Otsuki T."/>
            <person name="Sugiyama T."/>
            <person name="Irie R."/>
            <person name="Wakamatsu A."/>
            <person name="Hayashi K."/>
            <person name="Sato H."/>
            <person name="Nagai K."/>
            <person name="Kimura K."/>
            <person name="Makita H."/>
            <person name="Sekine M."/>
            <person name="Obayashi M."/>
            <person name="Nishi T."/>
            <person name="Shibahara T."/>
            <person name="Tanaka T."/>
            <person name="Ishii S."/>
            <person name="Yamamoto J."/>
            <person name="Saito K."/>
            <person name="Kawai Y."/>
            <person name="Isono Y."/>
            <person name="Nakamura Y."/>
            <person name="Nagahari K."/>
            <person name="Murakami K."/>
            <person name="Yasuda T."/>
            <person name="Iwayanagi T."/>
            <person name="Wagatsuma M."/>
            <person name="Shiratori A."/>
            <person name="Sudo H."/>
            <person name="Hosoiri T."/>
            <person name="Kaku Y."/>
            <person name="Kodaira H."/>
            <person name="Kondo H."/>
            <person name="Sugawara M."/>
            <person name="Takahashi M."/>
            <person name="Kanda K."/>
            <person name="Yokoi T."/>
            <person name="Furuya T."/>
            <person name="Kikkawa E."/>
            <person name="Omura Y."/>
            <person name="Abe K."/>
            <person name="Kamihara K."/>
            <person name="Katsuta N."/>
            <person name="Sato K."/>
            <person name="Tanikawa M."/>
            <person name="Yamazaki M."/>
            <person name="Ninomiya K."/>
            <person name="Ishibashi T."/>
            <person name="Yamashita H."/>
            <person name="Murakawa K."/>
            <person name="Fujimori K."/>
            <person name="Tanai H."/>
            <person name="Kimata M."/>
            <person name="Watanabe M."/>
            <person name="Hiraoka S."/>
            <person name="Chiba Y."/>
            <person name="Ishida S."/>
            <person name="Ono Y."/>
            <person name="Takiguchi S."/>
            <person name="Watanabe S."/>
            <person name="Yosida M."/>
            <person name="Hotuta T."/>
            <person name="Kusano J."/>
            <person name="Kanehori K."/>
            <person name="Takahashi-Fujii A."/>
            <person name="Hara H."/>
            <person name="Tanase T.-O."/>
            <person name="Nomura Y."/>
            <person name="Togiya S."/>
            <person name="Komai F."/>
            <person name="Hara R."/>
            <person name="Takeuchi K."/>
            <person name="Arita M."/>
            <person name="Imose N."/>
            <person name="Musashino K."/>
            <person name="Yuuki H."/>
            <person name="Oshima A."/>
            <person name="Sasaki N."/>
            <person name="Aotsuka S."/>
            <person name="Yoshikawa Y."/>
            <person name="Matsunawa H."/>
            <person name="Ichihara T."/>
            <person name="Shiohata N."/>
            <person name="Sano S."/>
            <person name="Moriya S."/>
            <person name="Momiyama H."/>
            <person name="Satoh N."/>
            <person name="Takami S."/>
            <person name="Terashima Y."/>
            <person name="Suzuki O."/>
            <person name="Nakagawa S."/>
            <person name="Senoh A."/>
            <person name="Mizoguchi H."/>
            <person name="Goto Y."/>
            <person name="Shimizu F."/>
            <person name="Wakebe H."/>
            <person name="Hishigaki H."/>
            <person name="Watanabe T."/>
            <person name="Sugiyama A."/>
            <person name="Takemoto M."/>
            <person name="Kawakami B."/>
            <person name="Yamazaki M."/>
            <person name="Watanabe K."/>
            <person name="Kumagai A."/>
            <person name="Itakura S."/>
            <person name="Fukuzumi Y."/>
            <person name="Fujimori Y."/>
            <person name="Komiyama M."/>
            <person name="Tashiro H."/>
            <person name="Tanigami A."/>
            <person name="Fujiwara T."/>
            <person name="Ono T."/>
            <person name="Yamada K."/>
            <person name="Fujii Y."/>
            <person name="Ozaki K."/>
            <person name="Hirao M."/>
            <person name="Ohmori Y."/>
            <person name="Kawabata A."/>
            <person name="Hikiji T."/>
            <person name="Kobatake N."/>
            <person name="Inagaki H."/>
            <person name="Ikema Y."/>
            <person name="Okamoto S."/>
            <person name="Okitani R."/>
            <person name="Kawakami T."/>
            <person name="Noguchi S."/>
            <person name="Itoh T."/>
            <person name="Shigeta K."/>
            <person name="Senba T."/>
            <person name="Matsumura K."/>
            <person name="Nakajima Y."/>
            <person name="Mizuno T."/>
            <person name="Morinaga M."/>
            <person name="Sasaki M."/>
            <person name="Togashi T."/>
            <person name="Oyama M."/>
            <person name="Hata H."/>
            <person name="Watanabe M."/>
            <person name="Komatsu T."/>
            <person name="Mizushima-Sugano J."/>
            <person name="Satoh T."/>
            <person name="Shirai Y."/>
            <person name="Takahashi Y."/>
            <person name="Nakagawa K."/>
            <person name="Okumura K."/>
            <person name="Nagase T."/>
            <person name="Nomura N."/>
            <person name="Kikuchi H."/>
            <person name="Masuho Y."/>
            <person name="Yamashita R."/>
            <person name="Nakai K."/>
            <person name="Yada T."/>
            <person name="Nakamura Y."/>
            <person name="Ohara O."/>
            <person name="Isogai T."/>
            <person name="Sugano S."/>
        </authorList>
    </citation>
    <scope>NUCLEOTIDE SEQUENCE [LARGE SCALE MRNA]</scope>
    <source>
        <tissue>Mammary gland</tissue>
    </source>
</reference>
<reference key="3">
    <citation type="submission" date="2005-09" db="EMBL/GenBank/DDBJ databases">
        <authorList>
            <person name="Mural R.J."/>
            <person name="Istrail S."/>
            <person name="Sutton G.G."/>
            <person name="Florea L."/>
            <person name="Halpern A.L."/>
            <person name="Mobarry C.M."/>
            <person name="Lippert R."/>
            <person name="Walenz B."/>
            <person name="Shatkay H."/>
            <person name="Dew I."/>
            <person name="Miller J.R."/>
            <person name="Flanigan M.J."/>
            <person name="Edwards N.J."/>
            <person name="Bolanos R."/>
            <person name="Fasulo D."/>
            <person name="Halldorsson B.V."/>
            <person name="Hannenhalli S."/>
            <person name="Turner R."/>
            <person name="Yooseph S."/>
            <person name="Lu F."/>
            <person name="Nusskern D.R."/>
            <person name="Shue B.C."/>
            <person name="Zheng X.H."/>
            <person name="Zhong F."/>
            <person name="Delcher A.L."/>
            <person name="Huson D.H."/>
            <person name="Kravitz S.A."/>
            <person name="Mouchard L."/>
            <person name="Reinert K."/>
            <person name="Remington K.A."/>
            <person name="Clark A.G."/>
            <person name="Waterman M.S."/>
            <person name="Eichler E.E."/>
            <person name="Adams M.D."/>
            <person name="Hunkapiller M.W."/>
            <person name="Myers E.W."/>
            <person name="Venter J.C."/>
        </authorList>
    </citation>
    <scope>NUCLEOTIDE SEQUENCE [LARGE SCALE GENOMIC DNA]</scope>
</reference>
<reference key="4">
    <citation type="journal article" date="2004" name="Genome Res.">
        <title>The status, quality, and expansion of the NIH full-length cDNA project: the Mammalian Gene Collection (MGC).</title>
        <authorList>
            <consortium name="The MGC Project Team"/>
        </authorList>
    </citation>
    <scope>NUCLEOTIDE SEQUENCE [LARGE SCALE MRNA]</scope>
    <source>
        <tissue>Liver</tissue>
    </source>
</reference>
<reference key="5">
    <citation type="journal article" date="2017" name="Mol. Genet. Metab.">
        <title>Hypertryptophanemia due to tryptophan 2,3-dioxygenase deficiency.</title>
        <authorList>
            <person name="Ferreira P."/>
            <person name="Shin I."/>
            <person name="Sosova I."/>
            <person name="Dornevil K."/>
            <person name="Jain S."/>
            <person name="Dewey D."/>
            <person name="Liu F."/>
            <person name="Liu A."/>
        </authorList>
    </citation>
    <scope>INVOLVEMENT IN HYPTRP</scope>
    <scope>FUNCTION</scope>
    <scope>CATALYTIC ACTIVITY</scope>
    <scope>COFACTOR</scope>
    <scope>BIOPHYSICOCHEMICAL PROPERTIES</scope>
    <scope>SUBUNIT</scope>
    <scope>VARIANT HYPTRP ILE-108</scope>
    <scope>CHARACTERIZATION OF VARIANT HYPTRP ILE-108</scope>
</reference>
<reference evidence="5" key="6">
    <citation type="journal article" date="2014" name="Proteins">
        <title>Structural and functional analyses of human tryptophan 2,3-dioxygenase.</title>
        <authorList>
            <person name="Meng B."/>
            <person name="Wu D."/>
            <person name="Gu J."/>
            <person name="Ouyang S."/>
            <person name="Ding W."/>
            <person name="Liu Z.J."/>
        </authorList>
    </citation>
    <scope>X-RAY CRYSTALLOGRAPHY (2.90 ANGSTROMS) OF 19-388 OF APOPROTEIN</scope>
    <scope>SUBUNIT</scope>
    <scope>CATALYTIC ACTIVITY</scope>
    <scope>FUNCTION</scope>
    <scope>COFACTOR</scope>
    <scope>PATHWAY</scope>
    <scope>BIOPHYSICOCHEMICAL PROPERTIES</scope>
    <scope>MUTAGENESIS OF TYR-42; TYR-45; PHE-72; HIS-76; PHE-140; ARG-144; SER-151 AND HIS-328</scope>
</reference>
<reference evidence="6 7" key="7">
    <citation type="journal article" date="2016" name="Sci. Rep.">
        <title>Molecular basis for catalysis and substrate-mediated cellular stabilization of human tryptophan 2,3-dioxygenase.</title>
        <authorList>
            <person name="Lewis-Ballester A."/>
            <person name="Forouhar F."/>
            <person name="Kim S.M."/>
            <person name="Lew S."/>
            <person name="Wang Y."/>
            <person name="Karkashon S."/>
            <person name="Seetharaman J."/>
            <person name="Batabyal D."/>
            <person name="Chiang B.Y."/>
            <person name="Hussain M."/>
            <person name="Correia M.A."/>
            <person name="Yeh S.R."/>
            <person name="Tong L."/>
        </authorList>
    </citation>
    <scope>X-RAY CRYSTALLOGRAPHY (2.44 ANGSTROMS) OF 18-389 IN COMPLEX WITH HEME AND TRYPTOPHAN</scope>
    <scope>COFACTOR</scope>
    <scope>SUBUNIT</scope>
    <scope>CATALYTIC ACTIVITY</scope>
    <scope>PATHWAY</scope>
    <scope>MUTAGENESIS OF TYR-175</scope>
</reference>
<gene>
    <name evidence="1" type="primary">TDO2</name>
    <name type="synonym">TDO</name>
</gene>
<proteinExistence type="evidence at protein level"/>
<comment type="function">
    <text evidence="1 2 3 4">Heme-dependent dioxygenase that catalyzes the oxidative cleavage of the L-tryptophan (L-Trp) pyrrole ring and converts L-tryptophan to N-formyl-L-kynurenine. Catalyzes the oxidative cleavage of the indole moiety.</text>
</comment>
<comment type="catalytic activity">
    <reaction evidence="1 2 3 4">
        <text>L-tryptophan + O2 = N-formyl-L-kynurenine</text>
        <dbReference type="Rhea" id="RHEA:24536"/>
        <dbReference type="ChEBI" id="CHEBI:15379"/>
        <dbReference type="ChEBI" id="CHEBI:57912"/>
        <dbReference type="ChEBI" id="CHEBI:58629"/>
        <dbReference type="EC" id="1.13.11.11"/>
    </reaction>
</comment>
<comment type="cofactor">
    <cofactor evidence="1 2 3 4">
        <name>heme</name>
        <dbReference type="ChEBI" id="CHEBI:30413"/>
    </cofactor>
    <text evidence="1 3">Binds 1 heme group per subunit.</text>
</comment>
<comment type="biophysicochemical properties">
    <kinetics>
        <KM evidence="2">0.135 mM for L-tryptophan</KM>
        <KM evidence="4">0.132 mM for L-tryptophan</KM>
        <text evidence="4">kcat is 0.54 sec(-1) with L-tryptophan as substrate.</text>
    </kinetics>
</comment>
<comment type="pathway">
    <text evidence="1 2 3">Amino-acid degradation; L-tryptophan degradation via kynurenine pathway; L-kynurenine from L-tryptophan: step 1/2.</text>
</comment>
<comment type="subunit">
    <text evidence="1 2 3 4">Homotetramer. Dimer of dimers.</text>
</comment>
<comment type="interaction">
    <interactant intactId="EBI-743494">
        <id>P48775</id>
    </interactant>
    <interactant intactId="EBI-2371423">
        <id>O43865</id>
        <label>AHCYL1</label>
    </interactant>
    <organismsDiffer>false</organismsDiffer>
    <experiments>3</experiments>
</comment>
<comment type="interaction">
    <interactant intactId="EBI-743494">
        <id>P48775</id>
    </interactant>
    <interactant intactId="EBI-743231">
        <id>O95671</id>
        <label>ASMTL</label>
    </interactant>
    <organismsDiffer>false</organismsDiffer>
    <experiments>12</experiments>
</comment>
<comment type="interaction">
    <interactant intactId="EBI-743494">
        <id>P48775</id>
    </interactant>
    <interactant intactId="EBI-1049597">
        <id>P27797</id>
        <label>CALR</label>
    </interactant>
    <organismsDiffer>false</organismsDiffer>
    <experiments>3</experiments>
</comment>
<comment type="interaction">
    <interactant intactId="EBI-743494">
        <id>P48775</id>
    </interactant>
    <interactant intactId="EBI-727477">
        <id>P12830</id>
        <label>CDH1</label>
    </interactant>
    <organismsDiffer>false</organismsDiffer>
    <experiments>3</experiments>
</comment>
<comment type="interaction">
    <interactant intactId="EBI-743494">
        <id>P48775</id>
    </interactant>
    <interactant intactId="EBI-351007">
        <id>P36957</id>
        <label>DLST</label>
    </interactant>
    <organismsDiffer>false</organismsDiffer>
    <experiments>3</experiments>
</comment>
<comment type="interaction">
    <interactant intactId="EBI-743494">
        <id>P48775</id>
    </interactant>
    <interactant intactId="EBI-719526">
        <id>O60762</id>
        <label>DPM1</label>
    </interactant>
    <organismsDiffer>false</organismsDiffer>
    <experiments>6</experiments>
</comment>
<comment type="interaction">
    <interactant intactId="EBI-743494">
        <id>P48775</id>
    </interactant>
    <interactant intactId="EBI-73440">
        <id>P06730</id>
        <label>EIF4E</label>
    </interactant>
    <organismsDiffer>false</organismsDiffer>
    <experiments>4</experiments>
</comment>
<comment type="interaction">
    <interactant intactId="EBI-743494">
        <id>P48775</id>
    </interactant>
    <interactant intactId="EBI-739832">
        <id>Q8TBB1</id>
        <label>LNX1</label>
    </interactant>
    <organismsDiffer>false</organismsDiffer>
    <experiments>3</experiments>
</comment>
<comment type="interaction">
    <interactant intactId="EBI-743494">
        <id>P48775</id>
    </interactant>
    <interactant intactId="EBI-748229">
        <id>Q9H8S9</id>
        <label>MOB1A</label>
    </interactant>
    <organismsDiffer>false</organismsDiffer>
    <experiments>6</experiments>
</comment>
<comment type="interaction">
    <interactant intactId="EBI-743494">
        <id>P48775</id>
    </interactant>
    <interactant intactId="EBI-9679267">
        <id>Q70IA8</id>
        <label>MOB3C</label>
    </interactant>
    <organismsDiffer>false</organismsDiffer>
    <experiments>3</experiments>
</comment>
<comment type="interaction">
    <interactant intactId="EBI-743494">
        <id>P48775</id>
    </interactant>
    <interactant intactId="EBI-1055945">
        <id>Q8TDX7</id>
        <label>NEK7</label>
    </interactant>
    <organismsDiffer>false</organismsDiffer>
    <experiments>3</experiments>
</comment>
<comment type="interaction">
    <interactant intactId="EBI-743494">
        <id>P48775</id>
    </interactant>
    <interactant intactId="EBI-10311409">
        <id>Q9NPG2</id>
        <label>NGB</label>
    </interactant>
    <organismsDiffer>false</organismsDiffer>
    <experiments>6</experiments>
</comment>
<comment type="interaction">
    <interactant intactId="EBI-743494">
        <id>P48775</id>
    </interactant>
    <interactant intactId="EBI-3917542">
        <id>Q9HAN9</id>
        <label>NMNAT1</label>
    </interactant>
    <organismsDiffer>false</organismsDiffer>
    <experiments>4</experiments>
</comment>
<comment type="interaction">
    <interactant intactId="EBI-743494">
        <id>P48775</id>
    </interactant>
    <interactant intactId="EBI-2811738">
        <id>P20393</id>
        <label>NR1D1</label>
    </interactant>
    <organismsDiffer>false</organismsDiffer>
    <experiments>3</experiments>
</comment>
<comment type="interaction">
    <interactant intactId="EBI-743494">
        <id>P48775</id>
    </interactant>
    <interactant intactId="EBI-79165">
        <id>Q9NRD5</id>
        <label>PICK1</label>
    </interactant>
    <organismsDiffer>false</organismsDiffer>
    <experiments>3</experiments>
</comment>
<comment type="interaction">
    <interactant intactId="EBI-743494">
        <id>P48775</id>
    </interactant>
    <interactant intactId="EBI-11339910">
        <id>Q8IYS1</id>
        <label>PM20D2</label>
    </interactant>
    <organismsDiffer>false</organismsDiffer>
    <experiments>3</experiments>
</comment>
<comment type="interaction">
    <interactant intactId="EBI-743494">
        <id>P48775</id>
    </interactant>
    <interactant intactId="EBI-727004">
        <id>O00560</id>
        <label>SDCBP</label>
    </interactant>
    <organismsDiffer>false</organismsDiffer>
    <experiments>7</experiments>
</comment>
<comment type="interaction">
    <interactant intactId="EBI-743494">
        <id>P48775</id>
    </interactant>
    <interactant intactId="EBI-742426">
        <id>Q9H190</id>
        <label>SDCBP2</label>
    </interactant>
    <organismsDiffer>false</organismsDiffer>
    <experiments>4</experiments>
</comment>
<comment type="interaction">
    <interactant intactId="EBI-743494">
        <id>P48775</id>
    </interactant>
    <interactant intactId="EBI-743494">
        <id>P48775</id>
        <label>TDO2</label>
    </interactant>
    <organismsDiffer>false</organismsDiffer>
    <experiments>6</experiments>
</comment>
<comment type="interaction">
    <interactant intactId="EBI-743494">
        <id>P48775</id>
    </interactant>
    <interactant intactId="EBI-8656416">
        <id>Q68DK2-5</id>
        <label>ZFYVE26</label>
    </interactant>
    <organismsDiffer>false</organismsDiffer>
    <experiments>6</experiments>
</comment>
<comment type="disease" evidence="4">
    <disease id="DI-05124">
        <name>Hypertryptophanemia</name>
        <acronym>HYPTRP</acronym>
        <description>An autosomal recessive condition characterized by persistent hypertryptophanemia and hyperserotoninemia.</description>
        <dbReference type="MIM" id="600627"/>
    </disease>
    <text>The disease is caused by variants affecting the gene represented in this entry.</text>
</comment>
<comment type="similarity">
    <text evidence="1">Belongs to the tryptophan 2,3-dioxygenase family.</text>
</comment>
<protein>
    <recommendedName>
        <fullName evidence="1">Tryptophan 2,3-dioxygenase</fullName>
        <shortName evidence="1">TDO</shortName>
        <ecNumber evidence="1 2 3 4">1.13.11.11</ecNumber>
    </recommendedName>
    <alternativeName>
        <fullName evidence="1">Tryptamin 2,3-dioxygenase</fullName>
    </alternativeName>
    <alternativeName>
        <fullName evidence="1">Tryptophan oxygenase</fullName>
        <shortName evidence="1">TO</shortName>
        <shortName evidence="1">TRPO</shortName>
    </alternativeName>
    <alternativeName>
        <fullName evidence="1">Tryptophan pyrrolase</fullName>
    </alternativeName>
    <alternativeName>
        <fullName evidence="1">Tryptophanase</fullName>
    </alternativeName>
</protein>